<proteinExistence type="evidence at protein level"/>
<dbReference type="EC" id="1.-.-.-" evidence="6"/>
<dbReference type="EMBL" id="MW690134">
    <property type="protein sequence ID" value="QXF14604.1"/>
    <property type="molecule type" value="Genomic_DNA"/>
</dbReference>
<dbReference type="SMR" id="A0A8F4NVX8"/>
<dbReference type="GO" id="GO:0005739">
    <property type="term" value="C:mitochondrion"/>
    <property type="evidence" value="ECO:0007669"/>
    <property type="project" value="TreeGrafter"/>
</dbReference>
<dbReference type="GO" id="GO:0000166">
    <property type="term" value="F:nucleotide binding"/>
    <property type="evidence" value="ECO:0007669"/>
    <property type="project" value="UniProtKB-KW"/>
</dbReference>
<dbReference type="GO" id="GO:0016491">
    <property type="term" value="F:oxidoreductase activity"/>
    <property type="evidence" value="ECO:0007669"/>
    <property type="project" value="UniProtKB-KW"/>
</dbReference>
<dbReference type="CDD" id="cd08267">
    <property type="entry name" value="MDR1"/>
    <property type="match status" value="1"/>
</dbReference>
<dbReference type="Gene3D" id="3.90.180.10">
    <property type="entry name" value="Medium-chain alcohol dehydrogenases, catalytic domain"/>
    <property type="match status" value="1"/>
</dbReference>
<dbReference type="Gene3D" id="3.40.50.720">
    <property type="entry name" value="NAD(P)-binding Rossmann-like Domain"/>
    <property type="match status" value="1"/>
</dbReference>
<dbReference type="InterPro" id="IPR011032">
    <property type="entry name" value="GroES-like_sf"/>
</dbReference>
<dbReference type="InterPro" id="IPR036291">
    <property type="entry name" value="NAD(P)-bd_dom_sf"/>
</dbReference>
<dbReference type="InterPro" id="IPR020843">
    <property type="entry name" value="PKS_ER"/>
</dbReference>
<dbReference type="InterPro" id="IPR050700">
    <property type="entry name" value="YIM1/Zinc_Alcohol_DH_Fams"/>
</dbReference>
<dbReference type="PANTHER" id="PTHR11695">
    <property type="entry name" value="ALCOHOL DEHYDROGENASE RELATED"/>
    <property type="match status" value="1"/>
</dbReference>
<dbReference type="PANTHER" id="PTHR11695:SF294">
    <property type="entry name" value="RETICULON-4-INTERACTING PROTEIN 1, MITOCHONDRIAL"/>
    <property type="match status" value="1"/>
</dbReference>
<dbReference type="Pfam" id="PF13602">
    <property type="entry name" value="ADH_zinc_N_2"/>
    <property type="match status" value="1"/>
</dbReference>
<dbReference type="SMART" id="SM00829">
    <property type="entry name" value="PKS_ER"/>
    <property type="match status" value="1"/>
</dbReference>
<dbReference type="SUPFAM" id="SSF50129">
    <property type="entry name" value="GroES-like"/>
    <property type="match status" value="1"/>
</dbReference>
<dbReference type="SUPFAM" id="SSF51735">
    <property type="entry name" value="NAD(P)-binding Rossmann-fold domains"/>
    <property type="match status" value="1"/>
</dbReference>
<accession>A0A8F4NVX8</accession>
<gene>
    <name evidence="4" type="primary">pydE</name>
</gene>
<protein>
    <recommendedName>
        <fullName evidence="4">Medium chain reductase pydE</fullName>
        <ecNumber evidence="6">1.-.-.-</ecNumber>
    </recommendedName>
    <alternativeName>
        <fullName evidence="4">Pyrrocidines biosynthesis cluster protein E</fullName>
    </alternativeName>
</protein>
<comment type="function">
    <text evidence="3 6">Medium chain reductase; part of the gene cluster that mediates the biosynthesis of pyrrocidines, fungal natural products containing a macrocyclic para-cyclophane connected to a decahydrofluorene ring system that show potent antibiotic activities toward Gram-negative bacteria (PubMed:33834778). Within the pathway, pydE functions synergistically with pydB, pydX and pydZ to form the cyclophane (PubMed:33834778). The pathway begins with the PKS-NRPS pydA which, with the help of the trans-enoyl reductase pydC, synthesizes the polyketide-tyrosyl acyl thioester product which can be reductively off-loaded by the terminal reductase (R) domain in pydA. The alpha/beta hydrolase pydG is then required to catalyze the subsequent Knoevenagel condensation that affords the 3-pyrrolin-2-one ring, whereas the four proteins pydB, pydE, pydX and pydZ then function synergistically to form the cyclophane. PydB and the membrane-bound pydX and pydZ are lipid-binding proteins that can sequester and mold the pdyG product into the inverse S-shape. Binding of the medium chain reductase pydE to the complex would trigger the cascade oxidative cyclization. PydY is involved in the Diels-Alder cycloaddition that forms the decahydrofluorene core. Additional non-enzymatic hydroxylation yields pyrrocidine A2 which can be further reduced into pyrrocidine B by an endogenous reductase (Probable).</text>
</comment>
<comment type="pathway">
    <text evidence="3">Mycotoxin biosynthesis.</text>
</comment>
<comment type="subunit">
    <text evidence="1">Monomer.</text>
</comment>
<comment type="similarity">
    <text evidence="5">Belongs to the zinc-containing alcohol dehydrogenase family.</text>
</comment>
<evidence type="ECO:0000250" key="1">
    <source>
        <dbReference type="UniProtKB" id="Q9Y7D0"/>
    </source>
</evidence>
<evidence type="ECO:0000255" key="2"/>
<evidence type="ECO:0000269" key="3">
    <source>
    </source>
</evidence>
<evidence type="ECO:0000303" key="4">
    <source>
    </source>
</evidence>
<evidence type="ECO:0000305" key="5"/>
<evidence type="ECO:0000305" key="6">
    <source>
    </source>
</evidence>
<organism>
    <name type="scientific">Acremonium sp</name>
    <dbReference type="NCBI Taxonomy" id="2046025"/>
    <lineage>
        <taxon>Eukaryota</taxon>
        <taxon>Fungi</taxon>
        <taxon>Dikarya</taxon>
        <taxon>Ascomycota</taxon>
        <taxon>Pezizomycotina</taxon>
        <taxon>Sordariomycetes</taxon>
        <taxon>Hypocreomycetidae</taxon>
        <taxon>Hypocreales</taxon>
        <taxon>Hypocreales incertae sedis</taxon>
        <taxon>Acremonium</taxon>
    </lineage>
</organism>
<keyword id="KW-0521">NADP</keyword>
<keyword id="KW-0547">Nucleotide-binding</keyword>
<keyword id="KW-0560">Oxidoreductase</keyword>
<keyword id="KW-0843">Virulence</keyword>
<sequence length="365" mass="39654">MSSTMRGWVRQHRGPYESSLKLIDSLPVPPDPGSDSSDIIVRVSYVALEFSIAHIMGIFPALPFAPPLVPEICVSGTVASAGGKAPEELRQPGTQVLAMTDPMSMMLFGTGALKEYMRLPEQYVVPLLQPSHSVTTDHPHGTAERPQALTLAEGAGLISNGSAAQAVVRAANVLSGQRVLVNGASGSVGHIVSQLCRARGAYVVGVASGVNQDFVRRYGCNEFVDYTKHTDLPEYLASTYGSQPFDSILDCVGSQDLYANSPRYLLPGRPLVNIGAFSMTDSLLSTLYQWSMNSWCPTWLGGVPRPYILFSNTPDMQGVLSLVEMVQQGKLKVHIDSEFEMEDLIKAYERVTSKRARGKVLIRIH</sequence>
<name>PYDE_ACRSP</name>
<feature type="chain" id="PRO_0000458426" description="Medium chain reductase pydE">
    <location>
        <begin position="1"/>
        <end position="365"/>
    </location>
</feature>
<feature type="domain" description="Enoyl reductase (ER)" evidence="2">
    <location>
        <begin position="21"/>
        <end position="362"/>
    </location>
</feature>
<feature type="binding site" evidence="1">
    <location>
        <begin position="185"/>
        <end position="188"/>
    </location>
    <ligand>
        <name>NADP(+)</name>
        <dbReference type="ChEBI" id="CHEBI:58349"/>
    </ligand>
</feature>
<feature type="binding site" evidence="1">
    <location>
        <position position="226"/>
    </location>
    <ligand>
        <name>NADP(+)</name>
        <dbReference type="ChEBI" id="CHEBI:58349"/>
    </ligand>
</feature>
<feature type="binding site" evidence="1">
    <location>
        <begin position="274"/>
        <end position="275"/>
    </location>
    <ligand>
        <name>NADP(+)</name>
        <dbReference type="ChEBI" id="CHEBI:58349"/>
    </ligand>
</feature>
<feature type="binding site" evidence="1">
    <location>
        <begin position="354"/>
        <end position="355"/>
    </location>
    <ligand>
        <name>NADP(+)</name>
        <dbReference type="ChEBI" id="CHEBI:58349"/>
    </ligand>
</feature>
<reference key="1">
    <citation type="journal article" date="2021" name="J. Am. Chem. Soc.">
        <title>Biosynthesis of para-cyclophane-containing hirsutellone family of fungal natural products.</title>
        <authorList>
            <person name="Ohashi M."/>
            <person name="Kakule T.B."/>
            <person name="Tang M.C."/>
            <person name="Jamieson C.S."/>
            <person name="Liu M."/>
            <person name="Zhao Y.L."/>
            <person name="Houk K.N."/>
            <person name="Tang Y."/>
        </authorList>
    </citation>
    <scope>NUCLEOTIDE SEQUENCE [GENOMIC DNA]</scope>
    <scope>FUNCTION</scope>
    <scope>CATALYTIC ACTIVITY</scope>
    <scope>PATHWAY</scope>
</reference>